<gene>
    <name evidence="1" type="primary">glgC</name>
    <name type="ordered locus">MUL_4526</name>
</gene>
<accession>A0PVW7</accession>
<protein>
    <recommendedName>
        <fullName evidence="1">Glucose-1-phosphate adenylyltransferase</fullName>
        <ecNumber evidence="1">2.7.7.27</ecNumber>
    </recommendedName>
    <alternativeName>
        <fullName evidence="1">ADP-glucose pyrophosphorylase</fullName>
        <shortName evidence="1">ADPGlc PPase</shortName>
    </alternativeName>
    <alternativeName>
        <fullName evidence="1">ADP-glucose synthase</fullName>
    </alternativeName>
</protein>
<organism>
    <name type="scientific">Mycobacterium ulcerans (strain Agy99)</name>
    <dbReference type="NCBI Taxonomy" id="362242"/>
    <lineage>
        <taxon>Bacteria</taxon>
        <taxon>Bacillati</taxon>
        <taxon>Actinomycetota</taxon>
        <taxon>Actinomycetes</taxon>
        <taxon>Mycobacteriales</taxon>
        <taxon>Mycobacteriaceae</taxon>
        <taxon>Mycobacterium</taxon>
        <taxon>Mycobacterium ulcerans group</taxon>
    </lineage>
</organism>
<comment type="function">
    <text evidence="1">Involved in the biosynthesis of ADP-glucose, a building block, required in the biosynthesis of maltose-1-phosphate (M1P) and in the elongation reactions to produce linear alpha-1,4-glucans. Catalyzes the reaction between ATP and alpha-D-glucose 1-phosphate (G1P) to produce pyrophosphate and ADP-Glc.</text>
</comment>
<comment type="catalytic activity">
    <reaction evidence="1">
        <text>alpha-D-glucose 1-phosphate + ATP + H(+) = ADP-alpha-D-glucose + diphosphate</text>
        <dbReference type="Rhea" id="RHEA:12120"/>
        <dbReference type="ChEBI" id="CHEBI:15378"/>
        <dbReference type="ChEBI" id="CHEBI:30616"/>
        <dbReference type="ChEBI" id="CHEBI:33019"/>
        <dbReference type="ChEBI" id="CHEBI:57498"/>
        <dbReference type="ChEBI" id="CHEBI:58601"/>
        <dbReference type="EC" id="2.7.7.27"/>
    </reaction>
</comment>
<comment type="pathway">
    <text evidence="2">Capsule biogenesis; capsule polysaccharide biosynthesis.</text>
</comment>
<comment type="pathway">
    <text evidence="1">Glycan biosynthesis; glycogen biosynthesis.</text>
</comment>
<comment type="similarity">
    <text evidence="1">Belongs to the bacterial/plant glucose-1-phosphate adenylyltransferase family.</text>
</comment>
<feature type="chain" id="PRO_1000051576" description="Glucose-1-phosphate adenylyltransferase">
    <location>
        <begin position="1"/>
        <end position="404"/>
    </location>
</feature>
<feature type="binding site" evidence="1">
    <location>
        <position position="99"/>
    </location>
    <ligand>
        <name>alpha-D-glucose 1-phosphate</name>
        <dbReference type="ChEBI" id="CHEBI:58601"/>
    </ligand>
</feature>
<feature type="binding site" evidence="1">
    <location>
        <position position="164"/>
    </location>
    <ligand>
        <name>alpha-D-glucose 1-phosphate</name>
        <dbReference type="ChEBI" id="CHEBI:58601"/>
    </ligand>
</feature>
<feature type="binding site" evidence="1">
    <location>
        <begin position="179"/>
        <end position="180"/>
    </location>
    <ligand>
        <name>alpha-D-glucose 1-phosphate</name>
        <dbReference type="ChEBI" id="CHEBI:58601"/>
    </ligand>
</feature>
<feature type="binding site" evidence="1">
    <location>
        <position position="197"/>
    </location>
    <ligand>
        <name>alpha-D-glucose 1-phosphate</name>
        <dbReference type="ChEBI" id="CHEBI:58601"/>
    </ligand>
</feature>
<sequence length="404" mass="43713">MREAPHVLGIVLAGGEGKRLYPLTADRAKPAVPFGGAYRLIDFVLSNLVNARYLRICVLTQYKSHSLDRHISQNWRLSGLAGEYITPVPAQQRLGPRWYTGSADAIYQSLNLIYDEDPDYIVVFGADHVYRMDPEQMVRFHIDSGAGVTVAGIRVPRADASAFGCIDADDAGTIRDFVEKPLEPPGTPDDPTSTFVSMGNYVFTTKVLIDAIRADADDDHSDHDMGGDIIPRLVADGMAVVYDFSNNEVPGATDRDRAYWRDVGTLDAFYDAHMDLVSVHPVFNLYNKRWPIRGESENLAPAKFVNGGSAQESVVGAGSIISAASVRNSVLSSNVVVEDGAIVEGSVIMPGARVGRDAVVRHAILDKNVVVGPGEMVGVDLDKDRERFAISAGGVVAVGKGVWI</sequence>
<dbReference type="EC" id="2.7.7.27" evidence="1"/>
<dbReference type="EMBL" id="CP000325">
    <property type="protein sequence ID" value="ABL06486.1"/>
    <property type="molecule type" value="Genomic_DNA"/>
</dbReference>
<dbReference type="RefSeq" id="WP_011742085.1">
    <property type="nucleotide sequence ID" value="NC_008611.1"/>
</dbReference>
<dbReference type="SMR" id="A0PVW7"/>
<dbReference type="KEGG" id="mul:MUL_4526"/>
<dbReference type="eggNOG" id="COG0448">
    <property type="taxonomic scope" value="Bacteria"/>
</dbReference>
<dbReference type="HOGENOM" id="CLU_029499_14_1_11"/>
<dbReference type="UniPathway" id="UPA00164"/>
<dbReference type="UniPathway" id="UPA00934"/>
<dbReference type="Proteomes" id="UP000000765">
    <property type="component" value="Chromosome"/>
</dbReference>
<dbReference type="GO" id="GO:0005524">
    <property type="term" value="F:ATP binding"/>
    <property type="evidence" value="ECO:0007669"/>
    <property type="project" value="UniProtKB-KW"/>
</dbReference>
<dbReference type="GO" id="GO:0008878">
    <property type="term" value="F:glucose-1-phosphate adenylyltransferase activity"/>
    <property type="evidence" value="ECO:0007669"/>
    <property type="project" value="UniProtKB-UniRule"/>
</dbReference>
<dbReference type="GO" id="GO:0045227">
    <property type="term" value="P:capsule polysaccharide biosynthetic process"/>
    <property type="evidence" value="ECO:0007669"/>
    <property type="project" value="UniProtKB-UniPathway"/>
</dbReference>
<dbReference type="GO" id="GO:0005978">
    <property type="term" value="P:glycogen biosynthetic process"/>
    <property type="evidence" value="ECO:0007669"/>
    <property type="project" value="UniProtKB-UniRule"/>
</dbReference>
<dbReference type="CDD" id="cd02508">
    <property type="entry name" value="ADP_Glucose_PP"/>
    <property type="match status" value="1"/>
</dbReference>
<dbReference type="CDD" id="cd04651">
    <property type="entry name" value="LbH_G1P_AT_C"/>
    <property type="match status" value="1"/>
</dbReference>
<dbReference type="FunFam" id="2.160.10.10:FF:000020">
    <property type="entry name" value="Glucose-1-phosphate adenylyltransferase"/>
    <property type="match status" value="1"/>
</dbReference>
<dbReference type="FunFam" id="3.90.550.10:FF:000014">
    <property type="entry name" value="Glucose-1-phosphate adenylyltransferase"/>
    <property type="match status" value="1"/>
</dbReference>
<dbReference type="Gene3D" id="2.160.10.10">
    <property type="entry name" value="Hexapeptide repeat proteins"/>
    <property type="match status" value="1"/>
</dbReference>
<dbReference type="Gene3D" id="3.90.550.10">
    <property type="entry name" value="Spore Coat Polysaccharide Biosynthesis Protein SpsA, Chain A"/>
    <property type="match status" value="1"/>
</dbReference>
<dbReference type="HAMAP" id="MF_00624">
    <property type="entry name" value="GlgC"/>
    <property type="match status" value="1"/>
</dbReference>
<dbReference type="InterPro" id="IPR011831">
    <property type="entry name" value="ADP-Glc_PPase"/>
</dbReference>
<dbReference type="InterPro" id="IPR005836">
    <property type="entry name" value="ADP_Glu_pyroP_CS"/>
</dbReference>
<dbReference type="InterPro" id="IPR023049">
    <property type="entry name" value="GlgC_bac"/>
</dbReference>
<dbReference type="InterPro" id="IPR056818">
    <property type="entry name" value="GlmU/GlgC-like_hexapep"/>
</dbReference>
<dbReference type="InterPro" id="IPR005835">
    <property type="entry name" value="NTP_transferase_dom"/>
</dbReference>
<dbReference type="InterPro" id="IPR029044">
    <property type="entry name" value="Nucleotide-diphossugar_trans"/>
</dbReference>
<dbReference type="InterPro" id="IPR011004">
    <property type="entry name" value="Trimer_LpxA-like_sf"/>
</dbReference>
<dbReference type="NCBIfam" id="TIGR02091">
    <property type="entry name" value="glgC"/>
    <property type="match status" value="1"/>
</dbReference>
<dbReference type="NCBIfam" id="NF001947">
    <property type="entry name" value="PRK00725.1"/>
    <property type="match status" value="1"/>
</dbReference>
<dbReference type="NCBIfam" id="NF002023">
    <property type="entry name" value="PRK00844.1"/>
    <property type="match status" value="1"/>
</dbReference>
<dbReference type="PANTHER" id="PTHR43523:SF2">
    <property type="entry name" value="GLUCOSE-1-PHOSPHATE ADENYLYLTRANSFERASE"/>
    <property type="match status" value="1"/>
</dbReference>
<dbReference type="PANTHER" id="PTHR43523">
    <property type="entry name" value="GLUCOSE-1-PHOSPHATE ADENYLYLTRANSFERASE-RELATED"/>
    <property type="match status" value="1"/>
</dbReference>
<dbReference type="Pfam" id="PF24894">
    <property type="entry name" value="Hexapep_GlmU"/>
    <property type="match status" value="1"/>
</dbReference>
<dbReference type="Pfam" id="PF00483">
    <property type="entry name" value="NTP_transferase"/>
    <property type="match status" value="1"/>
</dbReference>
<dbReference type="SUPFAM" id="SSF53448">
    <property type="entry name" value="Nucleotide-diphospho-sugar transferases"/>
    <property type="match status" value="1"/>
</dbReference>
<dbReference type="SUPFAM" id="SSF51161">
    <property type="entry name" value="Trimeric LpxA-like enzymes"/>
    <property type="match status" value="1"/>
</dbReference>
<dbReference type="PROSITE" id="PS00808">
    <property type="entry name" value="ADP_GLC_PYROPHOSPH_1"/>
    <property type="match status" value="1"/>
</dbReference>
<dbReference type="PROSITE" id="PS00809">
    <property type="entry name" value="ADP_GLC_PYROPHOSPH_2"/>
    <property type="match status" value="1"/>
</dbReference>
<dbReference type="PROSITE" id="PS00810">
    <property type="entry name" value="ADP_GLC_PYROPHOSPH_3"/>
    <property type="match status" value="1"/>
</dbReference>
<keyword id="KW-0067">ATP-binding</keyword>
<keyword id="KW-0119">Carbohydrate metabolism</keyword>
<keyword id="KW-0320">Glycogen biosynthesis</keyword>
<keyword id="KW-0321">Glycogen metabolism</keyword>
<keyword id="KW-0547">Nucleotide-binding</keyword>
<keyword id="KW-0548">Nucleotidyltransferase</keyword>
<keyword id="KW-0808">Transferase</keyword>
<evidence type="ECO:0000255" key="1">
    <source>
        <dbReference type="HAMAP-Rule" id="MF_00624"/>
    </source>
</evidence>
<evidence type="ECO:0000305" key="2"/>
<reference key="1">
    <citation type="journal article" date="2007" name="Genome Res.">
        <title>Reductive evolution and niche adaptation inferred from the genome of Mycobacterium ulcerans, the causative agent of Buruli ulcer.</title>
        <authorList>
            <person name="Stinear T.P."/>
            <person name="Seemann T."/>
            <person name="Pidot S."/>
            <person name="Frigui W."/>
            <person name="Reysset G."/>
            <person name="Garnier T."/>
            <person name="Meurice G."/>
            <person name="Simon D."/>
            <person name="Bouchier C."/>
            <person name="Ma L."/>
            <person name="Tichit M."/>
            <person name="Porter J.L."/>
            <person name="Ryan J."/>
            <person name="Johnson P.D.R."/>
            <person name="Davies J.K."/>
            <person name="Jenkin G.A."/>
            <person name="Small P.L.C."/>
            <person name="Jones L.M."/>
            <person name="Tekaia F."/>
            <person name="Laval F."/>
            <person name="Daffe M."/>
            <person name="Parkhill J."/>
            <person name="Cole S.T."/>
        </authorList>
    </citation>
    <scope>NUCLEOTIDE SEQUENCE [LARGE SCALE GENOMIC DNA]</scope>
    <source>
        <strain>Agy99</strain>
    </source>
</reference>
<proteinExistence type="inferred from homology"/>
<name>GLGC_MYCUA</name>